<protein>
    <recommendedName>
        <fullName>Inositol phosphoceramide mannosyltransferase 1</fullName>
        <ecNumber>2.4.-.-</ecNumber>
    </recommendedName>
    <alternativeName>
        <fullName>IPC mannosyltransferase 1</fullName>
    </alternativeName>
</protein>
<evidence type="ECO:0000255" key="1"/>
<evidence type="ECO:0000269" key="2">
    <source>
    </source>
</evidence>
<evidence type="ECO:0000305" key="3"/>
<reference key="1">
    <citation type="journal article" date="2002" name="Nature">
        <title>The genome sequence of Schizosaccharomyces pombe.</title>
        <authorList>
            <person name="Wood V."/>
            <person name="Gwilliam R."/>
            <person name="Rajandream M.A."/>
            <person name="Lyne M.H."/>
            <person name="Lyne R."/>
            <person name="Stewart A."/>
            <person name="Sgouros J.G."/>
            <person name="Peat N."/>
            <person name="Hayles J."/>
            <person name="Baker S.G."/>
            <person name="Basham D."/>
            <person name="Bowman S."/>
            <person name="Brooks K."/>
            <person name="Brown D."/>
            <person name="Brown S."/>
            <person name="Chillingworth T."/>
            <person name="Churcher C.M."/>
            <person name="Collins M."/>
            <person name="Connor R."/>
            <person name="Cronin A."/>
            <person name="Davis P."/>
            <person name="Feltwell T."/>
            <person name="Fraser A."/>
            <person name="Gentles S."/>
            <person name="Goble A."/>
            <person name="Hamlin N."/>
            <person name="Harris D.E."/>
            <person name="Hidalgo J."/>
            <person name="Hodgson G."/>
            <person name="Holroyd S."/>
            <person name="Hornsby T."/>
            <person name="Howarth S."/>
            <person name="Huckle E.J."/>
            <person name="Hunt S."/>
            <person name="Jagels K."/>
            <person name="James K.D."/>
            <person name="Jones L."/>
            <person name="Jones M."/>
            <person name="Leather S."/>
            <person name="McDonald S."/>
            <person name="McLean J."/>
            <person name="Mooney P."/>
            <person name="Moule S."/>
            <person name="Mungall K.L."/>
            <person name="Murphy L.D."/>
            <person name="Niblett D."/>
            <person name="Odell C."/>
            <person name="Oliver K."/>
            <person name="O'Neil S."/>
            <person name="Pearson D."/>
            <person name="Quail M.A."/>
            <person name="Rabbinowitsch E."/>
            <person name="Rutherford K.M."/>
            <person name="Rutter S."/>
            <person name="Saunders D."/>
            <person name="Seeger K."/>
            <person name="Sharp S."/>
            <person name="Skelton J."/>
            <person name="Simmonds M.N."/>
            <person name="Squares R."/>
            <person name="Squares S."/>
            <person name="Stevens K."/>
            <person name="Taylor K."/>
            <person name="Taylor R.G."/>
            <person name="Tivey A."/>
            <person name="Walsh S.V."/>
            <person name="Warren T."/>
            <person name="Whitehead S."/>
            <person name="Woodward J.R."/>
            <person name="Volckaert G."/>
            <person name="Aert R."/>
            <person name="Robben J."/>
            <person name="Grymonprez B."/>
            <person name="Weltjens I."/>
            <person name="Vanstreels E."/>
            <person name="Rieger M."/>
            <person name="Schaefer M."/>
            <person name="Mueller-Auer S."/>
            <person name="Gabel C."/>
            <person name="Fuchs M."/>
            <person name="Duesterhoeft A."/>
            <person name="Fritzc C."/>
            <person name="Holzer E."/>
            <person name="Moestl D."/>
            <person name="Hilbert H."/>
            <person name="Borzym K."/>
            <person name="Langer I."/>
            <person name="Beck A."/>
            <person name="Lehrach H."/>
            <person name="Reinhardt R."/>
            <person name="Pohl T.M."/>
            <person name="Eger P."/>
            <person name="Zimmermann W."/>
            <person name="Wedler H."/>
            <person name="Wambutt R."/>
            <person name="Purnelle B."/>
            <person name="Goffeau A."/>
            <person name="Cadieu E."/>
            <person name="Dreano S."/>
            <person name="Gloux S."/>
            <person name="Lelaure V."/>
            <person name="Mottier S."/>
            <person name="Galibert F."/>
            <person name="Aves S.J."/>
            <person name="Xiang Z."/>
            <person name="Hunt C."/>
            <person name="Moore K."/>
            <person name="Hurst S.M."/>
            <person name="Lucas M."/>
            <person name="Rochet M."/>
            <person name="Gaillardin C."/>
            <person name="Tallada V.A."/>
            <person name="Garzon A."/>
            <person name="Thode G."/>
            <person name="Daga R.R."/>
            <person name="Cruzado L."/>
            <person name="Jimenez J."/>
            <person name="Sanchez M."/>
            <person name="del Rey F."/>
            <person name="Benito J."/>
            <person name="Dominguez A."/>
            <person name="Revuelta J.L."/>
            <person name="Moreno S."/>
            <person name="Armstrong J."/>
            <person name="Forsburg S.L."/>
            <person name="Cerutti L."/>
            <person name="Lowe T."/>
            <person name="McCombie W.R."/>
            <person name="Paulsen I."/>
            <person name="Potashkin J."/>
            <person name="Shpakovski G.V."/>
            <person name="Ussery D."/>
            <person name="Barrell B.G."/>
            <person name="Nurse P."/>
        </authorList>
    </citation>
    <scope>NUCLEOTIDE SEQUENCE [LARGE SCALE GENOMIC DNA]</scope>
    <source>
        <strain>972 / ATCC 24843</strain>
    </source>
</reference>
<reference key="2">
    <citation type="journal article" date="2006" name="Nat. Biotechnol.">
        <title>ORFeome cloning and global analysis of protein localization in the fission yeast Schizosaccharomyces pombe.</title>
        <authorList>
            <person name="Matsuyama A."/>
            <person name="Arai R."/>
            <person name="Yashiroda Y."/>
            <person name="Shirai A."/>
            <person name="Kamata A."/>
            <person name="Sekido S."/>
            <person name="Kobayashi Y."/>
            <person name="Hashimoto A."/>
            <person name="Hamamoto M."/>
            <person name="Hiraoka Y."/>
            <person name="Horinouchi S."/>
            <person name="Yoshida M."/>
        </authorList>
    </citation>
    <scope>SUBCELLULAR LOCATION [LARGE SCALE ANALYSIS]</scope>
</reference>
<reference key="3">
    <citation type="journal article" date="2010" name="J. Cell Sci.">
        <title>Mannosylinositol phosphorylceramide is a major sphingolipid component and is required for proper localization of plasma-membrane proteins in Schizosaccharomyces pombe.</title>
        <authorList>
            <person name="Nakase M."/>
            <person name="Tani M."/>
            <person name="Morita T."/>
            <person name="Kitamoto H.K."/>
            <person name="Kashiwazaki J."/>
            <person name="Nakamura T."/>
            <person name="Hosomi A."/>
            <person name="Tanaka N."/>
            <person name="Takegawa K."/>
        </authorList>
    </citation>
    <scope>SUBCELLULAR LOCATION</scope>
    <scope>FUNCTION</scope>
</reference>
<name>IMT1_SCHPO</name>
<sequence>MGRKCRKLLLKGIPICGVILLILWGYSLYNTLRFMVPGKATEPFTLSLSDVSDDTSAPGEMEKIPRVIHQLWKDENIPERWSNTVNSCRRQHPDENGWQFILWTDEKIMSFMNENYSWFMPVFHSYPYNIQKFDAARYFILYHYGGVYMDLDIGCKKPMDPLLSKATFILPSTEPIGYSNDWFAATPKHPFLYQAIHNLSKFNHRYFTKYPTVFLSAGPLFLSYQFCKYLLTPHEPVRVLPALLYGNGPNSFFSHVTGDSWHGTDAKVFIWIDRNSKSVLFFAFLAAFAILFLCLRVVFKRRRKRGIAASHSQIQELYP</sequence>
<keyword id="KW-0325">Glycoprotein</keyword>
<keyword id="KW-0328">Glycosyltransferase</keyword>
<keyword id="KW-0333">Golgi apparatus</keyword>
<keyword id="KW-0472">Membrane</keyword>
<keyword id="KW-1185">Reference proteome</keyword>
<keyword id="KW-0808">Transferase</keyword>
<keyword id="KW-0812">Transmembrane</keyword>
<keyword id="KW-1133">Transmembrane helix</keyword>
<gene>
    <name type="primary">imt1</name>
    <name type="ORF">SPAC2F3.01</name>
    <name type="ORF">SPAC323.09</name>
</gene>
<feature type="chain" id="PRO_0000014199" description="Inositol phosphoceramide mannosyltransferase 1">
    <location>
        <begin position="1"/>
        <end position="319"/>
    </location>
</feature>
<feature type="transmembrane region" description="Helical" evidence="1">
    <location>
        <begin position="8"/>
        <end position="28"/>
    </location>
</feature>
<feature type="transmembrane region" description="Helical" evidence="1">
    <location>
        <begin position="211"/>
        <end position="231"/>
    </location>
</feature>
<feature type="transmembrane region" description="Helical" evidence="1">
    <location>
        <begin position="279"/>
        <end position="299"/>
    </location>
</feature>
<feature type="glycosylation site" description="N-linked (GlcNAc...) asparagine" evidence="1">
    <location>
        <position position="115"/>
    </location>
</feature>
<feature type="glycosylation site" description="N-linked (GlcNAc...) asparagine" evidence="1">
    <location>
        <position position="198"/>
    </location>
</feature>
<accession>O14084</accession>
<accession>Q9UT90</accession>
<organism>
    <name type="scientific">Schizosaccharomyces pombe (strain 972 / ATCC 24843)</name>
    <name type="common">Fission yeast</name>
    <dbReference type="NCBI Taxonomy" id="284812"/>
    <lineage>
        <taxon>Eukaryota</taxon>
        <taxon>Fungi</taxon>
        <taxon>Dikarya</taxon>
        <taxon>Ascomycota</taxon>
        <taxon>Taphrinomycotina</taxon>
        <taxon>Schizosaccharomycetes</taxon>
        <taxon>Schizosaccharomycetales</taxon>
        <taxon>Schizosaccharomycetaceae</taxon>
        <taxon>Schizosaccharomyces</taxon>
    </lineage>
</organism>
<dbReference type="EC" id="2.4.-.-"/>
<dbReference type="EMBL" id="CU329670">
    <property type="protein sequence ID" value="CAB53412.2"/>
    <property type="molecule type" value="Genomic_DNA"/>
</dbReference>
<dbReference type="PIR" id="T38646">
    <property type="entry name" value="T38533"/>
</dbReference>
<dbReference type="RefSeq" id="XP_001713095.1">
    <property type="nucleotide sequence ID" value="XM_001713043.2"/>
</dbReference>
<dbReference type="SMR" id="O14084"/>
<dbReference type="BioGRID" id="280508">
    <property type="interactions" value="1"/>
</dbReference>
<dbReference type="STRING" id="284812.O14084"/>
<dbReference type="CAZy" id="GT32">
    <property type="family name" value="Glycosyltransferase Family 32"/>
</dbReference>
<dbReference type="GlyCosmos" id="O14084">
    <property type="glycosylation" value="2 sites, No reported glycans"/>
</dbReference>
<dbReference type="PaxDb" id="4896-SPAC2F3.01.1"/>
<dbReference type="EnsemblFungi" id="SPAC2F3.01.1">
    <property type="protein sequence ID" value="SPAC2F3.01.1:pep"/>
    <property type="gene ID" value="SPAC2F3.01"/>
</dbReference>
<dbReference type="PomBase" id="SPAC2F3.01">
    <property type="gene designation" value="imt1"/>
</dbReference>
<dbReference type="VEuPathDB" id="FungiDB:SPAC2F3.01"/>
<dbReference type="eggNOG" id="ENOG502QS3D">
    <property type="taxonomic scope" value="Eukaryota"/>
</dbReference>
<dbReference type="HOGENOM" id="CLU_036369_4_0_1"/>
<dbReference type="InParanoid" id="O14084"/>
<dbReference type="OMA" id="MDIGCRR"/>
<dbReference type="PhylomeDB" id="O14084"/>
<dbReference type="PRO" id="PR:O14084"/>
<dbReference type="Proteomes" id="UP000002485">
    <property type="component" value="Chromosome I"/>
</dbReference>
<dbReference type="GO" id="GO:0033106">
    <property type="term" value="C:cis-Golgi network membrane"/>
    <property type="evidence" value="ECO:0000314"/>
    <property type="project" value="PomBase"/>
</dbReference>
<dbReference type="GO" id="GO:0005794">
    <property type="term" value="C:Golgi apparatus"/>
    <property type="evidence" value="ECO:0007005"/>
    <property type="project" value="PomBase"/>
</dbReference>
<dbReference type="GO" id="GO:0005802">
    <property type="term" value="C:trans-Golgi network"/>
    <property type="evidence" value="ECO:0000314"/>
    <property type="project" value="PomBase"/>
</dbReference>
<dbReference type="GO" id="GO:0032588">
    <property type="term" value="C:trans-Golgi network membrane"/>
    <property type="evidence" value="ECO:0000314"/>
    <property type="project" value="PomBase"/>
</dbReference>
<dbReference type="GO" id="GO:0103064">
    <property type="term" value="F:inositol phosphorylceramide mannosyltransferase activity"/>
    <property type="evidence" value="ECO:0000266"/>
    <property type="project" value="PomBase"/>
</dbReference>
<dbReference type="GO" id="GO:0000030">
    <property type="term" value="F:mannosyltransferase activity"/>
    <property type="evidence" value="ECO:0000318"/>
    <property type="project" value="GO_Central"/>
</dbReference>
<dbReference type="GO" id="GO:0051999">
    <property type="term" value="P:mannosyl-inositol phosphorylceramide biosynthetic process"/>
    <property type="evidence" value="ECO:0000315"/>
    <property type="project" value="PomBase"/>
</dbReference>
<dbReference type="FunFam" id="3.90.550.20:FF:000005">
    <property type="entry name" value="Unplaced genomic scaffold supercont1.17, whole genome shotgun sequence"/>
    <property type="match status" value="1"/>
</dbReference>
<dbReference type="Gene3D" id="3.90.550.20">
    <property type="match status" value="1"/>
</dbReference>
<dbReference type="InterPro" id="IPR051706">
    <property type="entry name" value="Glycosyltransferase_domain"/>
</dbReference>
<dbReference type="InterPro" id="IPR007577">
    <property type="entry name" value="GlycoTrfase_DXD_sugar-bd_CS"/>
</dbReference>
<dbReference type="InterPro" id="IPR029044">
    <property type="entry name" value="Nucleotide-diphossugar_trans"/>
</dbReference>
<dbReference type="PANTHER" id="PTHR32385:SF15">
    <property type="entry name" value="INOSITOL PHOSPHOCERAMIDE MANNOSYLTRANSFERASE 1"/>
    <property type="match status" value="1"/>
</dbReference>
<dbReference type="PANTHER" id="PTHR32385">
    <property type="entry name" value="MANNOSYL PHOSPHORYLINOSITOL CERAMIDE SYNTHASE"/>
    <property type="match status" value="1"/>
</dbReference>
<dbReference type="Pfam" id="PF04488">
    <property type="entry name" value="Gly_transf_sug"/>
    <property type="match status" value="1"/>
</dbReference>
<dbReference type="SUPFAM" id="SSF53448">
    <property type="entry name" value="Nucleotide-diphospho-sugar transferases"/>
    <property type="match status" value="1"/>
</dbReference>
<comment type="function">
    <text evidence="2">With imt2 and imt3, is required for the synthesis of mannosyl phosphorylinositol ceramide (MIPC). Catalyzes the addition of mannosyl to phosphorylinositol ceramide (IPC). MIPC is essential for cell morphology, cell-surface distribution of ergosterol, localization for plasma-membrane transporters, and lipid-raft-mediated endocytosis of plasma membrane proteins to the vacuole.</text>
</comment>
<comment type="subcellular location">
    <subcellularLocation>
        <location>Golgi apparatus</location>
        <location>cis-Golgi network membrane</location>
        <topology>Multi-pass membrane protein</topology>
    </subcellularLocation>
    <subcellularLocation>
        <location>Golgi apparatus</location>
        <location>trans-Golgi network membrane</location>
        <topology>Multi-pass membrane protein</topology>
    </subcellularLocation>
</comment>
<comment type="similarity">
    <text evidence="3">Belongs to the glycosyltransferase 32 family.</text>
</comment>
<proteinExistence type="inferred from homology"/>